<dbReference type="EC" id="3.6.1.15" evidence="2"/>
<dbReference type="EC" id="3.4.22.28" evidence="10"/>
<dbReference type="EC" id="2.7.7.48" evidence="8"/>
<dbReference type="EMBL" id="AF327920">
    <property type="protein sequence ID" value="AAM46079.1"/>
    <property type="molecule type" value="Genomic_RNA"/>
</dbReference>
<dbReference type="RefSeq" id="NP_647602.1">
    <property type="nucleotide sequence ID" value="NC_003976.2"/>
</dbReference>
<dbReference type="PDB" id="3JB4">
    <property type="method" value="EM"/>
    <property type="resolution" value="3.80 A"/>
    <property type="chains" value="A=504-800, B=1-259, C=260-503"/>
</dbReference>
<dbReference type="PDB" id="8A2F">
    <property type="method" value="X-ray"/>
    <property type="resolution" value="1.73 A"/>
    <property type="chains" value="A/B=821-955"/>
</dbReference>
<dbReference type="PDBsum" id="3JB4"/>
<dbReference type="PDBsum" id="8A2F"/>
<dbReference type="SMR" id="Q8JV21"/>
<dbReference type="GeneID" id="944563"/>
<dbReference type="KEGG" id="vg:944563"/>
<dbReference type="Proteomes" id="UP000168371">
    <property type="component" value="Genome"/>
</dbReference>
<dbReference type="GO" id="GO:0044162">
    <property type="term" value="C:host cell cytoplasmic vesicle membrane"/>
    <property type="evidence" value="ECO:0007669"/>
    <property type="project" value="UniProtKB-SubCell"/>
</dbReference>
<dbReference type="GO" id="GO:0044167">
    <property type="term" value="C:host cell endoplasmic reticulum membrane"/>
    <property type="evidence" value="ECO:0007669"/>
    <property type="project" value="UniProtKB-SubCell"/>
</dbReference>
<dbReference type="GO" id="GO:0044178">
    <property type="term" value="C:host cell Golgi membrane"/>
    <property type="evidence" value="ECO:0007669"/>
    <property type="project" value="UniProtKB-SubCell"/>
</dbReference>
<dbReference type="GO" id="GO:0044196">
    <property type="term" value="C:host cell nucleolus"/>
    <property type="evidence" value="ECO:0007669"/>
    <property type="project" value="UniProtKB-SubCell"/>
</dbReference>
<dbReference type="GO" id="GO:0016020">
    <property type="term" value="C:membrane"/>
    <property type="evidence" value="ECO:0007669"/>
    <property type="project" value="UniProtKB-KW"/>
</dbReference>
<dbReference type="GO" id="GO:0019028">
    <property type="term" value="C:viral capsid"/>
    <property type="evidence" value="ECO:0007669"/>
    <property type="project" value="UniProtKB-KW"/>
</dbReference>
<dbReference type="GO" id="GO:0005524">
    <property type="term" value="F:ATP binding"/>
    <property type="evidence" value="ECO:0007669"/>
    <property type="project" value="UniProtKB-KW"/>
</dbReference>
<dbReference type="GO" id="GO:0015267">
    <property type="term" value="F:channel activity"/>
    <property type="evidence" value="ECO:0007669"/>
    <property type="project" value="UniProtKB-KW"/>
</dbReference>
<dbReference type="GO" id="GO:0004197">
    <property type="term" value="F:cysteine-type endopeptidase activity"/>
    <property type="evidence" value="ECO:0007669"/>
    <property type="project" value="InterPro"/>
</dbReference>
<dbReference type="GO" id="GO:0046872">
    <property type="term" value="F:metal ion binding"/>
    <property type="evidence" value="ECO:0007669"/>
    <property type="project" value="UniProtKB-KW"/>
</dbReference>
<dbReference type="GO" id="GO:0003723">
    <property type="term" value="F:RNA binding"/>
    <property type="evidence" value="ECO:0007669"/>
    <property type="project" value="UniProtKB-KW"/>
</dbReference>
<dbReference type="GO" id="GO:0003724">
    <property type="term" value="F:RNA helicase activity"/>
    <property type="evidence" value="ECO:0007669"/>
    <property type="project" value="InterPro"/>
</dbReference>
<dbReference type="GO" id="GO:0003968">
    <property type="term" value="F:RNA-directed RNA polymerase activity"/>
    <property type="evidence" value="ECO:0007669"/>
    <property type="project" value="UniProtKB-KW"/>
</dbReference>
<dbReference type="GO" id="GO:0005198">
    <property type="term" value="F:structural molecule activity"/>
    <property type="evidence" value="ECO:0007669"/>
    <property type="project" value="InterPro"/>
</dbReference>
<dbReference type="GO" id="GO:0006351">
    <property type="term" value="P:DNA-templated transcription"/>
    <property type="evidence" value="ECO:0007669"/>
    <property type="project" value="InterPro"/>
</dbReference>
<dbReference type="GO" id="GO:0034220">
    <property type="term" value="P:monoatomic ion transmembrane transport"/>
    <property type="evidence" value="ECO:0007669"/>
    <property type="project" value="UniProtKB-KW"/>
</dbReference>
<dbReference type="GO" id="GO:0006508">
    <property type="term" value="P:proteolysis"/>
    <property type="evidence" value="ECO:0007669"/>
    <property type="project" value="UniProtKB-KW"/>
</dbReference>
<dbReference type="GO" id="GO:0046718">
    <property type="term" value="P:symbiont entry into host cell"/>
    <property type="evidence" value="ECO:0007669"/>
    <property type="project" value="UniProtKB-KW"/>
</dbReference>
<dbReference type="GO" id="GO:0039694">
    <property type="term" value="P:viral RNA genome replication"/>
    <property type="evidence" value="ECO:0007669"/>
    <property type="project" value="InterPro"/>
</dbReference>
<dbReference type="GO" id="GO:0019062">
    <property type="term" value="P:virion attachment to host cell"/>
    <property type="evidence" value="ECO:0007669"/>
    <property type="project" value="UniProtKB-KW"/>
</dbReference>
<dbReference type="CDD" id="cd23217">
    <property type="entry name" value="Parechovirus_RdRp"/>
    <property type="match status" value="1"/>
</dbReference>
<dbReference type="CDD" id="cd00205">
    <property type="entry name" value="rhv_like"/>
    <property type="match status" value="2"/>
</dbReference>
<dbReference type="Gene3D" id="2.60.120.20">
    <property type="match status" value="3"/>
</dbReference>
<dbReference type="Gene3D" id="3.30.70.270">
    <property type="match status" value="1"/>
</dbReference>
<dbReference type="Gene3D" id="2.40.10.10">
    <property type="entry name" value="Trypsin-like serine proteases"/>
    <property type="match status" value="1"/>
</dbReference>
<dbReference type="InterPro" id="IPR043502">
    <property type="entry name" value="DNA/RNA_pol_sf"/>
</dbReference>
<dbReference type="InterPro" id="IPR000605">
    <property type="entry name" value="Helicase_SF3_ssDNA/RNA_vir"/>
</dbReference>
<dbReference type="InterPro" id="IPR014759">
    <property type="entry name" value="Helicase_SF3_ssRNA_vir"/>
</dbReference>
<dbReference type="InterPro" id="IPR007053">
    <property type="entry name" value="LRAT_dom"/>
</dbReference>
<dbReference type="InterPro" id="IPR044067">
    <property type="entry name" value="PCV_3C_PRO"/>
</dbReference>
<dbReference type="InterPro" id="IPR000199">
    <property type="entry name" value="Peptidase_C3A/C3B_picornavir"/>
</dbReference>
<dbReference type="InterPro" id="IPR009003">
    <property type="entry name" value="Peptidase_S1_PA"/>
</dbReference>
<dbReference type="InterPro" id="IPR043504">
    <property type="entry name" value="Peptidase_S1_PA_chymotrypsin"/>
</dbReference>
<dbReference type="InterPro" id="IPR001676">
    <property type="entry name" value="Picornavirus_capsid"/>
</dbReference>
<dbReference type="InterPro" id="IPR043128">
    <property type="entry name" value="Rev_trsase/Diguanyl_cyclase"/>
</dbReference>
<dbReference type="InterPro" id="IPR033703">
    <property type="entry name" value="Rhv-like"/>
</dbReference>
<dbReference type="InterPro" id="IPR001205">
    <property type="entry name" value="RNA-dir_pol_C"/>
</dbReference>
<dbReference type="InterPro" id="IPR007094">
    <property type="entry name" value="RNA-dir_pol_PSvirus"/>
</dbReference>
<dbReference type="InterPro" id="IPR029053">
    <property type="entry name" value="Viral_coat"/>
</dbReference>
<dbReference type="InterPro" id="IPR009419">
    <property type="entry name" value="VPP_parechovir_P3A"/>
</dbReference>
<dbReference type="Pfam" id="PF00548">
    <property type="entry name" value="Peptidase_C3"/>
    <property type="match status" value="1"/>
</dbReference>
<dbReference type="Pfam" id="PF06363">
    <property type="entry name" value="Picorna_P3A"/>
    <property type="match status" value="1"/>
</dbReference>
<dbReference type="Pfam" id="PF00680">
    <property type="entry name" value="RdRP_1"/>
    <property type="match status" value="1"/>
</dbReference>
<dbReference type="Pfam" id="PF00073">
    <property type="entry name" value="Rhv"/>
    <property type="match status" value="2"/>
</dbReference>
<dbReference type="Pfam" id="PF00910">
    <property type="entry name" value="RNA_helicase"/>
    <property type="match status" value="1"/>
</dbReference>
<dbReference type="SUPFAM" id="SSF56672">
    <property type="entry name" value="DNA/RNA polymerases"/>
    <property type="match status" value="1"/>
</dbReference>
<dbReference type="SUPFAM" id="SSF88633">
    <property type="entry name" value="Positive stranded ssRNA viruses"/>
    <property type="match status" value="2"/>
</dbReference>
<dbReference type="SUPFAM" id="SSF50494">
    <property type="entry name" value="Trypsin-like serine proteases"/>
    <property type="match status" value="1"/>
</dbReference>
<dbReference type="PROSITE" id="PS51934">
    <property type="entry name" value="LRAT"/>
    <property type="match status" value="1"/>
</dbReference>
<dbReference type="PROSITE" id="PS51874">
    <property type="entry name" value="PCV_3C_PRO"/>
    <property type="match status" value="1"/>
</dbReference>
<dbReference type="PROSITE" id="PS50507">
    <property type="entry name" value="RDRP_SSRNA_POS"/>
    <property type="match status" value="1"/>
</dbReference>
<dbReference type="PROSITE" id="PS51218">
    <property type="entry name" value="SF3_HELICASE_2"/>
    <property type="match status" value="1"/>
</dbReference>
<proteinExistence type="evidence at protein level"/>
<organism>
    <name type="scientific">Ljunganvirus 1</name>
    <name type="common">LV</name>
    <name type="synonym">Ljungan virus 1</name>
    <dbReference type="NCBI Taxonomy" id="1001061"/>
    <lineage>
        <taxon>Viruses</taxon>
        <taxon>Riboviria</taxon>
        <taxon>Orthornavirae</taxon>
        <taxon>Pisuviricota</taxon>
        <taxon>Pisoniviricetes</taxon>
        <taxon>Picornavirales</taxon>
        <taxon>Picornaviridae</taxon>
        <taxon>Paavivirinae</taxon>
        <taxon>Parechovirus</taxon>
        <taxon>Parechovirus B</taxon>
    </lineage>
</organism>
<comment type="function">
    <molecule>Capsid protein VP0</molecule>
    <text evidence="5 13">Forms an icosahedral capsid of pseudo T=3 symmetry together with capsid proteins VP1 and VP3 (PubMed:26446437). The capsid is 300 Angstroms in diameter, composed of 60 copies of each capsid protein and enclosing the viral positive strand RNA genome (PubMed:26446437). The attachment to the host cell receptor induces virion internalization predominantly through clathrin-mediated endocytosis (By similarity). Binds packaging signals present in the viral RNA (By similarity).</text>
</comment>
<comment type="function">
    <molecule>Capsid protein VP3</molecule>
    <text evidence="5 13">Forms an icosahedral capsid of pseudo T=3 symmetry together with capsid proteins VP0 and VP1 (PubMed:26446437). The capsid is 300 Angstroms in diameter, composed of 60 copies of each capsid protein and enclosing the viral positive strand RNA genome (PubMed:26446437). The attachment to the host cell receptor induces virion internalization predominantly through clathrin-mediated endocytosis (By similarity). Binds packaging signals present in the viral RNA (By similarity).</text>
</comment>
<comment type="function">
    <molecule>Capsid protein VP1</molecule>
    <text evidence="5 13">Forms an icosahedral capsid of pseudo T=3 symmetry together with capsid proteins VP0 and VP3 (PubMed:26446437). The capsid is 300 Angstroms in diameter, composed of 60 copies of each capsid protein and enclosing the viral positive strand RNA genome (PubMed:26446437). The attachment to the host cell receptor induces virion internalization predominantly through clathrin-mediated endocytosis (By similarity). Binds packaging signals present in the viral RNA (By similarity).</text>
</comment>
<comment type="function">
    <molecule>Protein 2A1</molecule>
    <text evidence="15">Mediates self-processing of the polyprotein by a translational effect termed 'ribosome skipping'. Mechanistically, 2A1-mediated cleavage occurs between the C-terminal glycine and the proline of the downstream protein 2A2.</text>
</comment>
<comment type="function">
    <molecule>Protein 2B</molecule>
    <text evidence="2">Plays an essential role in the virus replication cycle by acting as a viroporin. Creates a pore in the host endoplasmic reticulum and as a consequence releases Ca2+ in the cytoplasm of infected cell. In turn, high levels of cytoplasmic calcium may trigger membrane trafficking and transport of viral ER-associated proteins to viroplasms, sites of viral genome replication.</text>
</comment>
<comment type="function">
    <molecule>Protein 2C</molecule>
    <text evidence="2">Induces and associates with structural rearrangements of intracellular membranes. Displays RNA-binding, nucleotide binding and NTPase activities. May play a role in virion morphogenesis and viral RNA encapsidation by interacting with the capsid protein VP3.</text>
</comment>
<comment type="function">
    <molecule>Protein 3A</molecule>
    <text evidence="2 6">Localizes the viral replication complex to the surface of membranous vesicles (By similarity). It inhibits host cell endoplasmic reticulum-to-Golgi apparatus transport and causes the disassembly of the Golgi complex, possibly through GBF1 interaction (By similarity). This would result in depletion of MHC, trail receptors and IFN receptors at the host cell surface (By similarity). Plays an essential role in viral RNA replication by recruiting ACBD3 and PI4KB at the viral replication sites, thereby allowing the formation of the rearranged membranous structures where viral replication takes place (By similarity).</text>
</comment>
<comment type="function">
    <molecule>Viral protein genome-linked</molecule>
    <text evidence="2">Acts as a primer for viral RNA replication and remains covalently bound to viral genomic RNA. VPg is uridylylated prior to priming replication into VPg-pUpU. The VPg-pUpU is then used as primer on the genomic RNA poly(A) by the RNA-dependent RNA polymerase to replicate the viral genome. Following genome release from the infecting virion in the cytoplasm, the VPg-RNA linkage is probably removed by host TDP2. During the late stage of the replication cycle, host TDP2 is excluded from sites of viral RNA synthesis and encapsidation, allowing for the generation of progeny virions.</text>
</comment>
<comment type="function">
    <molecule>Protease 3C</molecule>
    <text evidence="3 4">Cysteine protease that generates mature viral proteins from the precursor polyprotein (By similarity). In addition to its proteolytic activity, it binds to viral RNA, and thus influences viral genome replication. RNA and substrate bind cooperatively to the protease (By similarity).</text>
</comment>
<comment type="function">
    <molecule>RNA-directed RNA polymerase 3D-POL</molecule>
    <text evidence="2">Replicates the viral genomic RNA on the surface of intracellular membranes. Covalently attaches UMP to a tyrosine of VPg, which is used to prime RNA synthesis. The positive stranded RNA genome is first replicated at virus induced membranous vesicles, creating a dsRNA genomic replication form. This dsRNA is then used as template to synthesize positive stranded RNA genomes. ss(+)RNA genomes are either translated, replicated or encapsidated.</text>
</comment>
<comment type="catalytic activity">
    <molecule>RNA-directed RNA polymerase 3D-POL</molecule>
    <reaction evidence="8">
        <text>RNA(n) + a ribonucleoside 5'-triphosphate = RNA(n+1) + diphosphate</text>
        <dbReference type="Rhea" id="RHEA:21248"/>
        <dbReference type="Rhea" id="RHEA-COMP:14527"/>
        <dbReference type="Rhea" id="RHEA-COMP:17342"/>
        <dbReference type="ChEBI" id="CHEBI:33019"/>
        <dbReference type="ChEBI" id="CHEBI:61557"/>
        <dbReference type="ChEBI" id="CHEBI:140395"/>
        <dbReference type="EC" id="2.7.7.48"/>
    </reaction>
</comment>
<comment type="catalytic activity">
    <molecule>Protein 2C</molecule>
    <reaction evidence="2">
        <text>a ribonucleoside 5'-triphosphate + H2O = a ribonucleoside 5'-diphosphate + phosphate + H(+)</text>
        <dbReference type="Rhea" id="RHEA:23680"/>
        <dbReference type="ChEBI" id="CHEBI:15377"/>
        <dbReference type="ChEBI" id="CHEBI:15378"/>
        <dbReference type="ChEBI" id="CHEBI:43474"/>
        <dbReference type="ChEBI" id="CHEBI:57930"/>
        <dbReference type="ChEBI" id="CHEBI:61557"/>
        <dbReference type="EC" id="3.6.1.15"/>
    </reaction>
</comment>
<comment type="catalytic activity">
    <molecule>Protease 3C</molecule>
    <reaction evidence="10">
        <text>Selective cleavage of Gln-|-Gly bond in the poliovirus polyprotein. In other picornavirus reactions Glu may be substituted for Gln, and Ser or Thr for Gly.</text>
        <dbReference type="EC" id="3.4.22.28"/>
    </reaction>
</comment>
<comment type="cofactor">
    <molecule>RNA-directed RNA polymerase 3D-POL</molecule>
    <cofactor evidence="2">
        <name>Mg(2+)</name>
        <dbReference type="ChEBI" id="CHEBI:18420"/>
    </cofactor>
    <text evidence="2">Binds 2 magnesium ions that constitute a dinuclear catalytic metal center. The magnesium ions are not prebound but only present for catalysis.</text>
</comment>
<comment type="subunit">
    <molecule>Capsid protein VP0</molecule>
    <text evidence="2">Interacts with capsid protein VP1 and capsid protein VP3 to form heterotrimeric protomers. Five protomers subsequently associate to form pentamers which serve as building blocks for the capsid.</text>
</comment>
<comment type="subunit">
    <molecule>Capsid protein VP1</molecule>
    <text evidence="2">Interacts with capsid protein VP0, and capsid protein VP3 to form heterotrimeric protomers. Five protomers subsequently associate to form pentamers which serve as building blocks for the capsid.</text>
</comment>
<comment type="subunit">
    <molecule>Capsid protein VP3</molecule>
    <text evidence="2">Interacts with capsid protein VP0 and capsid protein VP1 to form heterotrimeric protomers. Five protomers subsequently associate to form pentamers which serve as building blocks for the capsid.</text>
</comment>
<comment type="subunit">
    <molecule>Protein 2C</molecule>
    <text evidence="2">Homohexamer; forms a hexameric ring structure with 6-fold symmetry characteristic of AAA+ ATPases.</text>
</comment>
<comment type="subunit">
    <molecule>Protein 3A</molecule>
    <text evidence="2 5">Homodimer (By similarity). Interacts with host ACBD3 (By similarity).</text>
</comment>
<comment type="subunit">
    <molecule>Viral protein genome-linked</molecule>
    <text evidence="2">Interacts with RNA-directed RNA polymerase.</text>
</comment>
<comment type="subunit">
    <molecule>RNA-directed RNA polymerase 3D-POL</molecule>
    <text evidence="2">Interacts with Viral protein genome-linked.</text>
</comment>
<comment type="subcellular location">
    <molecule>Capsid protein VP3</molecule>
    <subcellularLocation>
        <location evidence="15">Virion</location>
    </subcellularLocation>
    <subcellularLocation>
        <location evidence="15">Host cytoplasm</location>
    </subcellularLocation>
</comment>
<comment type="subcellular location">
    <molecule>Capsid protein VP1</molecule>
    <subcellularLocation>
        <location evidence="15">Virion</location>
    </subcellularLocation>
    <subcellularLocation>
        <location evidence="15">Host cytoplasm</location>
    </subcellularLocation>
</comment>
<comment type="subcellular location">
    <molecule>Protein 2A H-NC</molecule>
    <subcellularLocation>
        <location evidence="5">Host cytoplasm</location>
    </subcellularLocation>
    <subcellularLocation>
        <location evidence="5">Host nucleus</location>
        <location evidence="5">Host nucleolus</location>
    </subcellularLocation>
</comment>
<comment type="subcellular location">
    <molecule>Protein 2B</molecule>
    <subcellularLocation>
        <location evidence="5">Host cytoplasmic vesicle membrane</location>
    </subcellularLocation>
    <subcellularLocation>
        <location evidence="5">Host endoplasmic reticulum membrane</location>
    </subcellularLocation>
</comment>
<comment type="subcellular location">
    <molecule>Protein 2C</molecule>
    <subcellularLocation>
        <location evidence="5">Host cytoplasmic vesicle membrane</location>
        <topology evidence="5">Peripheral membrane protein</topology>
        <orientation evidence="5">Cytoplasmic side</orientation>
    </subcellularLocation>
    <text evidence="5">Probably localizes to the surface of intracellular membrane vesicles that are induced after virus infection as the site for viral RNA replication. These vesicles are derived from the endoplasmic reticulum.</text>
</comment>
<comment type="subcellular location">
    <molecule>Protein 3A</molecule>
    <subcellularLocation>
        <location evidence="5">Host cytoplasmic vesicle membrane</location>
        <topology evidence="5">Peripheral membrane protein</topology>
        <orientation evidence="5">Cytoplasmic side</orientation>
    </subcellularLocation>
    <subcellularLocation>
        <location evidence="5">Host Golgi apparatus membrane</location>
    </subcellularLocation>
    <text evidence="1">Probably localizes to the surface of intracellular membrane vesicles that are induced after virus infection as the site for viral RNA replication. These vesicles are derived from the endoplasmic reticulum (By similarity).</text>
</comment>
<comment type="subcellular location">
    <molecule>Viral protein genome-linked</molecule>
    <subcellularLocation>
        <location evidence="5">Virion</location>
    </subcellularLocation>
</comment>
<comment type="subcellular location">
    <molecule>Protease 3C</molecule>
    <subcellularLocation>
        <location evidence="5">Host cytoplasm</location>
    </subcellularLocation>
</comment>
<comment type="subcellular location">
    <molecule>RNA-directed RNA polymerase 3D-POL</molecule>
    <subcellularLocation>
        <location evidence="5">Host cytoplasmic vesicle membrane</location>
        <topology evidence="5">Peripheral membrane protein</topology>
        <orientation evidence="5">Cytoplasmic side</orientation>
    </subcellularLocation>
    <text evidence="1">Probably localizes to the surface of intracellular membrane vesicles that are induced after virus infection as the site for viral RNA replication. These vesicles are derived from the endoplasmic reticulum (By similarity).</text>
</comment>
<comment type="domain">
    <molecule>Capsid protein VP0</molecule>
    <text evidence="5">The N-terminus mediates the interactions among pentamers (By similarity). In order to facilitate delivery of the virus genome into the cytoplasm, the N-termini of VP0s have to be released from contacts between pentamers and exposed at the particle surface, resulting in capsid disruption (By similarity).</text>
</comment>
<comment type="domain">
    <molecule>Capsid protein VP3</molecule>
    <text evidence="13">The N-terminus binds RNA.</text>
</comment>
<comment type="domain">
    <molecule>Protein 2A H-NC</molecule>
    <text evidence="5">Contains a H-NC box.</text>
</comment>
<comment type="PTM">
    <text evidence="1">VPg is uridylylated by the polymerase and is covalently linked to the 5'-end of genomic RNA. This uridylylated form acts as a nucleotide-peptide primer for the polymerase (By similarity).</text>
</comment>
<comment type="PTM">
    <text evidence="12 14">Specific enzymatic cleavages yield mature proteins (PubMed:12163611). All cleavages are catalyzed by P3C (PubMed:12163611).</text>
</comment>
<comment type="similarity">
    <text evidence="15">Belongs to the picornaviruses polyprotein family.</text>
</comment>
<evidence type="ECO:0000250" key="1"/>
<evidence type="ECO:0000250" key="2">
    <source>
        <dbReference type="UniProtKB" id="P03300"/>
    </source>
</evidence>
<evidence type="ECO:0000250" key="3">
    <source>
        <dbReference type="UniProtKB" id="P03304"/>
    </source>
</evidence>
<evidence type="ECO:0000250" key="4">
    <source>
        <dbReference type="UniProtKB" id="P12296"/>
    </source>
</evidence>
<evidence type="ECO:0000250" key="5">
    <source>
        <dbReference type="UniProtKB" id="Q66578"/>
    </source>
</evidence>
<evidence type="ECO:0000250" key="6">
    <source>
        <dbReference type="UniProtKB" id="Q9YLG5"/>
    </source>
</evidence>
<evidence type="ECO:0000255" key="7"/>
<evidence type="ECO:0000255" key="8">
    <source>
        <dbReference type="PROSITE-ProRule" id="PRU00539"/>
    </source>
</evidence>
<evidence type="ECO:0000255" key="9">
    <source>
        <dbReference type="PROSITE-ProRule" id="PRU00551"/>
    </source>
</evidence>
<evidence type="ECO:0000255" key="10">
    <source>
        <dbReference type="PROSITE-ProRule" id="PRU01222"/>
    </source>
</evidence>
<evidence type="ECO:0000255" key="11">
    <source>
        <dbReference type="PROSITE-ProRule" id="PRU01283"/>
    </source>
</evidence>
<evidence type="ECO:0000269" key="12">
    <source>
    </source>
</evidence>
<evidence type="ECO:0000269" key="13">
    <source>
    </source>
</evidence>
<evidence type="ECO:0000303" key="14">
    <source>
    </source>
</evidence>
<evidence type="ECO:0000305" key="15"/>
<evidence type="ECO:0000312" key="16">
    <source>
        <dbReference type="EMBL" id="AAM46079.1"/>
    </source>
</evidence>
<evidence type="ECO:0007744" key="17">
    <source>
        <dbReference type="PDB" id="3JB4"/>
    </source>
</evidence>
<evidence type="ECO:0007829" key="18">
    <source>
        <dbReference type="PDB" id="8A2F"/>
    </source>
</evidence>
<protein>
    <recommendedName>
        <fullName>Genome polyprotein</fullName>
    </recommendedName>
    <component>
        <recommendedName>
            <fullName>Capsid protein VP0</fullName>
        </recommendedName>
        <alternativeName>
            <fullName>P1AB</fullName>
        </alternativeName>
        <alternativeName>
            <fullName>Virion protein 0</fullName>
        </alternativeName>
    </component>
    <component>
        <recommendedName>
            <fullName>Capsid protein VP3</fullName>
        </recommendedName>
        <alternativeName>
            <fullName>P1C</fullName>
        </alternativeName>
        <alternativeName>
            <fullName>Virion protein 3</fullName>
        </alternativeName>
    </component>
    <component>
        <recommendedName>
            <fullName>Capsid protein VP1</fullName>
        </recommendedName>
        <alternativeName>
            <fullName>P1D</fullName>
        </alternativeName>
        <alternativeName>
            <fullName>Virion protein 1</fullName>
        </alternativeName>
    </component>
    <component>
        <recommendedName>
            <fullName>Protein 2A1</fullName>
            <shortName>P2A1</shortName>
        </recommendedName>
    </component>
    <component>
        <recommendedName>
            <fullName evidence="5">Protein 2A H-NC</fullName>
            <shortName>P2A2</shortName>
        </recommendedName>
    </component>
    <component>
        <recommendedName>
            <fullName>Protein 2B</fullName>
            <shortName>P2B</shortName>
        </recommendedName>
    </component>
    <component>
        <recommendedName>
            <fullName>Protein 2C</fullName>
            <shortName>P2C</shortName>
            <ecNumber evidence="2">3.6.1.15</ecNumber>
        </recommendedName>
    </component>
    <component>
        <recommendedName>
            <fullName>Protein 3A</fullName>
            <shortName>P3A</shortName>
        </recommendedName>
    </component>
    <component>
        <recommendedName>
            <fullName>Viral protein genome-linked</fullName>
            <shortName>VPg</shortName>
        </recommendedName>
        <alternativeName>
            <fullName>Protein 3B</fullName>
            <shortName>P3B</shortName>
        </alternativeName>
    </component>
    <component>
        <recommendedName>
            <fullName evidence="10">Protease 3C</fullName>
            <shortName evidence="10">P3C</shortName>
            <ecNumber evidence="10">3.4.22.28</ecNumber>
        </recommendedName>
        <alternativeName>
            <fullName>Picornain 3C</fullName>
        </alternativeName>
    </component>
    <component>
        <recommendedName>
            <fullName>RNA-directed RNA polymerase 3D-POL</fullName>
            <shortName>P3D-POL</shortName>
            <ecNumber evidence="8">2.7.7.48</ecNumber>
        </recommendedName>
    </component>
</protein>
<name>POLG_LJUV1</name>
<reference key="1">
    <citation type="journal article" date="2002" name="J. Virol.">
        <title>Molecular analysis of three Ljungan virus isolates reveals a new, close-to-root lineage of the Picornaviridae with a cluster of two unrelated 2A proteins.</title>
        <authorList>
            <person name="Johansson S."/>
            <person name="Niklasson B."/>
            <person name="Maizel J."/>
            <person name="Gorbalenya A.E."/>
            <person name="Lindberg A.M."/>
        </authorList>
    </citation>
    <scope>NUCLEOTIDE SEQUENCE [LARGE SCALE GENOMIC DNA]</scope>
    <scope>PROTEOLYTIC CLEAVAGE (GENOME POLYPROTEIN)</scope>
    <source>
        <strain evidence="16">87-012</strain>
    </source>
</reference>
<reference key="2">
    <citation type="journal article" date="2002" name="Virus Res.">
        <title>Phylogenetic analysis of Ljungan virus and A-2 plaque virus, new members of the Picornaviridae.</title>
        <authorList>
            <person name="Lindberg A.M."/>
            <person name="Johansson S."/>
        </authorList>
    </citation>
    <scope>NUCLEOTIDE SEQUENCE [LARGE SCALE GENOMIC DNA]</scope>
    <source>
        <strain evidence="16">87-012</strain>
    </source>
</reference>
<reference evidence="17" key="3">
    <citation type="journal article" date="2015" name="Nat. Commun.">
        <title>Structure of Ljungan virus provides insight into genome packaging of this picornavirus.</title>
        <authorList>
            <person name="Zhu L."/>
            <person name="Wang X."/>
            <person name="Ren J."/>
            <person name="Porta C."/>
            <person name="Wenham H."/>
            <person name="Ekstrom J.O."/>
            <person name="Panjwani A."/>
            <person name="Knowles N.J."/>
            <person name="Kotecha A."/>
            <person name="Siebert C.A."/>
            <person name="Lindberg A.M."/>
            <person name="Fry E.E."/>
            <person name="Rao Z."/>
            <person name="Tuthill T.J."/>
            <person name="Stuart D.I."/>
        </authorList>
    </citation>
    <scope>STRUCTURE BY ELECTRON MICROSCOPY (3.80 ANGSTROMS) OF 1-800</scope>
    <scope>DISULFIDE BONDS</scope>
    <scope>FUNCTION (CAPSID PROTEIN VP0)</scope>
    <scope>FUNCTION (CAPSID PROTEIN VP3)</scope>
    <scope>FUNCTION (CAPSID PROTEIN VP1)</scope>
    <scope>DOMAIN (CAPSID PROTEIN VP3)</scope>
</reference>
<organismHost>
    <name type="scientific">Homo sapiens</name>
    <name type="common">Human</name>
    <dbReference type="NCBI Taxonomy" id="9606"/>
</organismHost>
<organismHost>
    <name type="scientific">Microtus arvalis</name>
    <name type="common">Common vole</name>
    <name type="synonym">Field vole</name>
    <dbReference type="NCBI Taxonomy" id="47230"/>
</organismHost>
<organismHost>
    <name type="scientific">Myodes glareolus</name>
    <name type="common">Bank vole</name>
    <name type="synonym">Clethrionomys glareolus</name>
    <dbReference type="NCBI Taxonomy" id="447135"/>
</organismHost>
<sequence length="2253" mass="253468">MAASKMNPVGNLLSTVSSTVGSLLQNPSVEEKEMDSDRVAASTTTNAGNLVQASVAPTMPVKPDFKNTDDFLSMSYRSTTAPTNPTKMVHLAHGTWTTNQHRQALVASITLPQAFWPNQDFPAWGQSRYFAAVRCGFHIQVQLNVNIGSAGCLIAAYMPKTAHDHMNTYTFGSYTNLPHVLMNAATTSQADLYIPYVFNHNYARTDSDDLGGIYIWVWSALTVPSGSPTTVDVTIFGSLLDLDFQCPRPPGADTVIYTQGKRTVRKTKTSKFKWVRNKIDIAEGPGAMNIANVLSTTGGQTIALVGERAFYDPRTAGAAVRCKDLMEIARMPSVFLGESTEPDGRRGYFTWSHTISPVNWVFDDHIYLENMPNLRLFSSCYNYWRGSFVIKLTVYASTFNKGRLRMAFFPNREGAYTQDEAQNAIFVVCDIGLNNTFEMTIPYTWGNWMRPTRGNSLGHLRIDVLNRLTYNSSSPNAVNCILQIKMGDDAMFMVPTTSNLVWQGLHSWGSEMDLVDSLDNPDEIQDNEEIQTQNVEAAQGEEAATEVGLRATENDGSLSEQLNMSQPMFLNFKKHKVNIYAASHTKVDHIFGRAWAVGVFNTETAAIQKFDLHFPTSTHGALSRFFCFWTGELNIHILNVSTTNAFLKVAHTWFGTDSGIARTATLESNGTMIIPPNEQMTLCVPYYSEVPLRCVKGSDRNSAGLGSLFTQAVGRTISNRVQIFVSFRCPNFFFPLPAPREATSRSILERVDEANAEELEAVLEARTPDAPLRLKFNPEDPLKQLREAAKAYFNIMHSDEMDFAGGKFLNQCGDVETNPGPDIELVYKNRGFYKHYGVRFGGHIYHLNSQDILSTAITGKSDFIKEEDDGKWVHAMTAPLDYFTEKYINSMVGSKHIFSATSNCETIARDLFPGRKEITQSKALGIIGVILLSASLLSLLAVPWDYSSLQTVYNQSIEGDASGLTLLSQRCMTFFSNTMCETFNNDLVKFIIKILVRLLCYIVLYCHAPNMLTTMCLGTLLVLDITTCEILSANTKALFQALVDGDVKSLVWKIAENMQFAQSKDEQAEDMAATFNFASDMVNFVPMEQMRQEGWREFNDVSMSFRHVEWWLTMFKKVYNVLKSIFAPSIEQKAVDWIDRNQEYIADVLDHASNIIIKMKDPKEQRRASTISEYFEVLKQLKPIVSLCMKVAPSTKFSSQVFRIYSEMMRVNVRVPANTDLTRLEPIGIWVSSEPGQGKSFFTHMLSTCLLKSCNLEGIYTNPTGSEFMDGYIGQDIHIIDDAGQNREEKDLALLCQCISSVPFTVPMADLTEKGTFYTSKIVIATTNKFDFTSMVLTDPAALERRFPFHLRIRAVASYSRNNKLDVARSMAAMADGSCWEYSTDGGRAWKTLSMDELVKQITAVYTQRSDALMVWKRKLNTIRNEMSPGSSTGRIFEPLEETLCALERRFGQLADSLKDNYHKTADELIEAIEDMMAPSQSPFACFAESYRPTIKYTASDKVKSWVKNHMNRWKEFVMRNKGWFTLFSVLSSFLSILTLVYLHYKKEKKEEERQERAYNPQTAISKKGGKPKLSLVKTTNFVNEAPYMQDLEHCFAQTAYISSPETQDIIHCAALSEDTILVYGHSQFYFNRYEDLRLHFKGAIFPIEGGKISQVTVNGQPMDLILVKIDKLPITFKNYTKYYTTEVGKETLLIWNSEKGRLAMPVQCVAPAGPVETMEGTITHKTYSYKVASKKGMCGGLLVTRVHGTFKVLGMHIAGNGQVARAAAVHFISNGAAGFMDQGVVVAKEKLQKPIYLPSKTALNPSPLNGVVPVKMEPAVLSPHDTRLEVIMPSVVKTAAAKYRVNIFNPDFEIWERVVDELKSKFRTKLGIHKHVSFQKAVQGFSSLSSLDLSTSPGQKYVEKGMKKRDLLSTEPFWMHPQLEGDVKDILGAVYSGKKPHTFFAAHLKDELRKKEKIAQGKTRCIEACSIDYVIAYRVVMSSLYEAIYQTPAQELGLAVGMNPWTDWDPMINVLQPYNYGLDYSSYDGSLSEQLMRYGVEILAYCHEQPEAVMILHEPVINSQHLVMDEIWHVNGGMPSGAPCTTVLNSICNLLVCTYLAYEQSLDIEVLPIVYGDDVIFSVSSPLDAEYLVQSAAQNFGMEVTSSDKSGPPKLLKMDEIEFLKRTTKFFPGSTYKVGALSLDTMEQHIMWMKNLETFPEQLVSFENELVLHGKEIYDDYKNRFNPILNQWRVCMQDYEVALHRMLRYVFD</sequence>
<feature type="chain" id="PRO_0000456598" description="Genome polyprotein">
    <location>
        <begin position="1"/>
        <end position="2253"/>
    </location>
</feature>
<feature type="chain" id="PRO_0000456599" description="Capsid protein VP0">
    <location>
        <begin position="1"/>
        <end position="259"/>
    </location>
</feature>
<feature type="chain" id="PRO_0000456600" description="Capsid protein VP3">
    <location>
        <begin position="260"/>
        <end position="503"/>
    </location>
</feature>
<feature type="chain" id="PRO_0000456601" description="Capsid protein VP1">
    <location>
        <begin position="504"/>
        <end position="800"/>
    </location>
</feature>
<feature type="chain" id="PRO_0000456602" description="Protein 2A1">
    <location>
        <begin position="801"/>
        <end position="820"/>
    </location>
</feature>
<feature type="chain" id="PRO_0000456603" description="Protein 2A H-NC">
    <location>
        <begin position="821"/>
        <end position="955"/>
    </location>
</feature>
<feature type="chain" id="PRO_0000456604" description="Protein 2B">
    <location>
        <begin position="956"/>
        <end position="1093"/>
    </location>
</feature>
<feature type="chain" id="PRO_0000456605" description="Protein 2C">
    <location>
        <begin position="1094"/>
        <end position="1426"/>
    </location>
</feature>
<feature type="chain" id="PRO_0000456606" description="Protein 3A">
    <location>
        <begin position="1427"/>
        <end position="1556"/>
    </location>
</feature>
<feature type="chain" id="PRO_0000456607" description="Viral protein genome-linked">
    <location>
        <begin position="1557"/>
        <end position="1585"/>
    </location>
</feature>
<feature type="chain" id="PRO_0000456608" description="Protease 3C">
    <location>
        <begin position="1586"/>
        <end position="1783"/>
    </location>
</feature>
<feature type="chain" id="PRO_0000456609" description="RNA-directed RNA polymerase 3D-POL">
    <location>
        <begin position="1784"/>
        <end position="2253"/>
    </location>
</feature>
<feature type="transmembrane region" description="Helical" evidence="7">
    <location>
        <begin position="1002"/>
        <end position="1022"/>
    </location>
</feature>
<feature type="domain" description="LRAT" evidence="11">
    <location>
        <begin position="825"/>
        <end position="920"/>
    </location>
</feature>
<feature type="domain" description="SF3 helicase" evidence="9">
    <location>
        <begin position="1205"/>
        <end position="1366"/>
    </location>
</feature>
<feature type="domain" description="Peptidase C3" evidence="10">
    <location>
        <begin position="1586"/>
        <end position="1775"/>
    </location>
</feature>
<feature type="domain" description="RdRp catalytic" evidence="8">
    <location>
        <begin position="2018"/>
        <end position="2132"/>
    </location>
</feature>
<feature type="short sequence motif" description="Cell attachment site" evidence="7">
    <location>
        <begin position="750"/>
        <end position="752"/>
    </location>
</feature>
<feature type="active site" description="For protein 2A H-NC" evidence="11">
    <location>
        <position position="835"/>
    </location>
</feature>
<feature type="active site" description="For protein 2A H-NC" evidence="11">
    <location>
        <position position="846"/>
    </location>
</feature>
<feature type="active site" description="For protein 2A H-NC; Acyl-thioester intermediate" evidence="11">
    <location>
        <position position="904"/>
    </location>
</feature>
<feature type="active site" description="For protease 3C activity" evidence="10">
    <location>
        <position position="1626"/>
    </location>
</feature>
<feature type="active site" description="For protease 3C activity" evidence="10">
    <location>
        <position position="1664"/>
    </location>
</feature>
<feature type="active site" description="For protease 3C activity" evidence="10">
    <location>
        <position position="1739"/>
    </location>
</feature>
<feature type="active site" description="Acyl-thioester intermediate" evidence="11">
    <location>
        <position position="1970"/>
    </location>
</feature>
<feature type="binding site" evidence="2">
    <location>
        <position position="2024"/>
    </location>
    <ligand>
        <name>Mg(2+)</name>
        <dbReference type="ChEBI" id="CHEBI:18420"/>
        <label>1</label>
        <note>catalytic; for RdRp activity</note>
    </ligand>
</feature>
<feature type="binding site" evidence="2">
    <location>
        <position position="2024"/>
    </location>
    <ligand>
        <name>Mg(2+)</name>
        <dbReference type="ChEBI" id="CHEBI:18420"/>
        <label>2</label>
        <note>catalytic; for RdRp activity</note>
    </ligand>
</feature>
<feature type="binding site" evidence="2">
    <location>
        <position position="2118"/>
    </location>
    <ligand>
        <name>Mg(2+)</name>
        <dbReference type="ChEBI" id="CHEBI:18420"/>
        <label>1</label>
        <note>catalytic; for RdRp activity</note>
    </ligand>
</feature>
<feature type="binding site" evidence="2">
    <location>
        <position position="2118"/>
    </location>
    <ligand>
        <name>Mg(2+)</name>
        <dbReference type="ChEBI" id="CHEBI:18420"/>
        <label>2</label>
        <note>catalytic; for RdRp activity</note>
    </ligand>
</feature>
<feature type="site" description="Cleavage; by protease 3C" evidence="14">
    <location>
        <begin position="259"/>
        <end position="260"/>
    </location>
</feature>
<feature type="site" description="Cleavage; by protease 3C" evidence="14">
    <location>
        <begin position="503"/>
        <end position="504"/>
    </location>
</feature>
<feature type="site" description="Cleavage; by protease 3C" evidence="14">
    <location>
        <begin position="800"/>
        <end position="801"/>
    </location>
</feature>
<feature type="site" description="Cleavage; by ribosomal skip" evidence="14">
    <location>
        <begin position="820"/>
        <end position="821"/>
    </location>
</feature>
<feature type="site" description="Cleavage; by protease 3C" evidence="14">
    <location>
        <begin position="955"/>
        <end position="956"/>
    </location>
</feature>
<feature type="site" description="Cleavage; by protease 3C" evidence="14">
    <location>
        <begin position="1093"/>
        <end position="1094"/>
    </location>
</feature>
<feature type="site" description="Cleavage; by protease 3C" evidence="14">
    <location>
        <begin position="1426"/>
        <end position="1427"/>
    </location>
</feature>
<feature type="site" description="Cleavage; by protease 3C" evidence="14">
    <location>
        <begin position="1556"/>
        <end position="1557"/>
    </location>
</feature>
<feature type="site" description="Cleavage; by protease 3C" evidence="14">
    <location>
        <begin position="1585"/>
        <end position="1586"/>
    </location>
</feature>
<feature type="site" description="Cleavage; by protease 3C" evidence="14">
    <location>
        <begin position="1783"/>
        <end position="1784"/>
    </location>
</feature>
<feature type="modified residue" description="O-(5'-phospho-RNA)-tyrosine" evidence="2">
    <location>
        <position position="1559"/>
    </location>
</feature>
<feature type="disulfide bond" evidence="17">
    <location>
        <begin position="627"/>
        <end position="694"/>
    </location>
</feature>
<feature type="strand" evidence="18">
    <location>
        <begin position="823"/>
        <end position="829"/>
    </location>
</feature>
<feature type="strand" evidence="18">
    <location>
        <begin position="831"/>
        <end position="840"/>
    </location>
</feature>
<feature type="strand" evidence="18">
    <location>
        <begin position="843"/>
        <end position="847"/>
    </location>
</feature>
<feature type="helix" evidence="18">
    <location>
        <begin position="852"/>
        <end position="858"/>
    </location>
</feature>
<feature type="strand" evidence="18">
    <location>
        <begin position="860"/>
        <end position="867"/>
    </location>
</feature>
<feature type="strand" evidence="18">
    <location>
        <begin position="873"/>
        <end position="878"/>
    </location>
</feature>
<feature type="helix" evidence="18">
    <location>
        <begin position="880"/>
        <end position="887"/>
    </location>
</feature>
<feature type="strand" evidence="18">
    <location>
        <begin position="897"/>
        <end position="899"/>
    </location>
</feature>
<feature type="helix" evidence="18">
    <location>
        <begin position="902"/>
        <end position="904"/>
    </location>
</feature>
<feature type="helix" evidence="18">
    <location>
        <begin position="907"/>
        <end position="911"/>
    </location>
</feature>
<feature type="helix" evidence="18">
    <location>
        <begin position="920"/>
        <end position="937"/>
    </location>
</feature>
<feature type="helix" evidence="18">
    <location>
        <begin position="938"/>
        <end position="940"/>
    </location>
</feature>
<keyword id="KW-0002">3D-structure</keyword>
<keyword id="KW-0067">ATP-binding</keyword>
<keyword id="KW-0167">Capsid protein</keyword>
<keyword id="KW-0191">Covalent protein-RNA linkage</keyword>
<keyword id="KW-1015">Disulfide bond</keyword>
<keyword id="KW-0347">Helicase</keyword>
<keyword id="KW-1035">Host cytoplasm</keyword>
<keyword id="KW-1036">Host cytoplasmic vesicle</keyword>
<keyword id="KW-1038">Host endoplasmic reticulum</keyword>
<keyword id="KW-1040">Host Golgi apparatus</keyword>
<keyword id="KW-1043">Host membrane</keyword>
<keyword id="KW-1048">Host nucleus</keyword>
<keyword id="KW-0945">Host-virus interaction</keyword>
<keyword id="KW-0378">Hydrolase</keyword>
<keyword id="KW-0407">Ion channel</keyword>
<keyword id="KW-0406">Ion transport</keyword>
<keyword id="KW-0460">Magnesium</keyword>
<keyword id="KW-0472">Membrane</keyword>
<keyword id="KW-0479">Metal-binding</keyword>
<keyword id="KW-0547">Nucleotide-binding</keyword>
<keyword id="KW-0548">Nucleotidyltransferase</keyword>
<keyword id="KW-0597">Phosphoprotein</keyword>
<keyword id="KW-0645">Protease</keyword>
<keyword id="KW-0694">RNA-binding</keyword>
<keyword id="KW-0696">RNA-directed RNA polymerase</keyword>
<keyword id="KW-0788">Thiol protease</keyword>
<keyword id="KW-0808">Transferase</keyword>
<keyword id="KW-0812">Transmembrane</keyword>
<keyword id="KW-1133">Transmembrane helix</keyword>
<keyword id="KW-0813">Transport</keyword>
<keyword id="KW-1161">Viral attachment to host cell</keyword>
<keyword id="KW-1182">Viral ion channel</keyword>
<keyword id="KW-0693">Viral RNA replication</keyword>
<keyword id="KW-0946">Virion</keyword>
<keyword id="KW-1160">Virus entry into host cell</keyword>
<accession>Q8JV21</accession>